<comment type="function">
    <text evidence="1">Catalyzes the reversible cyclization of carbamoyl aspartate to dihydroorotate.</text>
</comment>
<comment type="catalytic activity">
    <reaction evidence="1">
        <text>(S)-dihydroorotate + H2O = N-carbamoyl-L-aspartate + H(+)</text>
        <dbReference type="Rhea" id="RHEA:24296"/>
        <dbReference type="ChEBI" id="CHEBI:15377"/>
        <dbReference type="ChEBI" id="CHEBI:15378"/>
        <dbReference type="ChEBI" id="CHEBI:30864"/>
        <dbReference type="ChEBI" id="CHEBI:32814"/>
        <dbReference type="EC" id="3.5.2.3"/>
    </reaction>
</comment>
<comment type="cofactor">
    <cofactor evidence="1">
        <name>Zn(2+)</name>
        <dbReference type="ChEBI" id="CHEBI:29105"/>
    </cofactor>
    <text evidence="1">Binds 2 Zn(2+) ions per subunit.</text>
</comment>
<comment type="pathway">
    <text evidence="1">Pyrimidine metabolism; UMP biosynthesis via de novo pathway; (S)-dihydroorotate from bicarbonate: step 3/3.</text>
</comment>
<comment type="similarity">
    <text evidence="1">Belongs to the metallo-dependent hydrolases superfamily. DHOase family. Class I DHOase subfamily.</text>
</comment>
<keyword id="KW-0378">Hydrolase</keyword>
<keyword id="KW-0479">Metal-binding</keyword>
<keyword id="KW-0665">Pyrimidine biosynthesis</keyword>
<keyword id="KW-1185">Reference proteome</keyword>
<keyword id="KW-0862">Zinc</keyword>
<feature type="chain" id="PRO_1000024095" description="Dihydroorotase">
    <location>
        <begin position="1"/>
        <end position="425"/>
    </location>
</feature>
<feature type="active site" evidence="1">
    <location>
        <position position="305"/>
    </location>
</feature>
<feature type="binding site" evidence="1">
    <location>
        <position position="60"/>
    </location>
    <ligand>
        <name>Zn(2+)</name>
        <dbReference type="ChEBI" id="CHEBI:29105"/>
        <label>1</label>
    </ligand>
</feature>
<feature type="binding site" evidence="1">
    <location>
        <begin position="62"/>
        <end position="64"/>
    </location>
    <ligand>
        <name>substrate</name>
    </ligand>
</feature>
<feature type="binding site" evidence="1">
    <location>
        <position position="62"/>
    </location>
    <ligand>
        <name>Zn(2+)</name>
        <dbReference type="ChEBI" id="CHEBI:29105"/>
        <label>1</label>
    </ligand>
</feature>
<feature type="binding site" evidence="1">
    <location>
        <position position="94"/>
    </location>
    <ligand>
        <name>substrate</name>
    </ligand>
</feature>
<feature type="binding site" evidence="1">
    <location>
        <position position="152"/>
    </location>
    <ligand>
        <name>Zn(2+)</name>
        <dbReference type="ChEBI" id="CHEBI:29105"/>
        <label>1</label>
    </ligand>
</feature>
<feature type="binding site" evidence="1">
    <location>
        <position position="152"/>
    </location>
    <ligand>
        <name>Zn(2+)</name>
        <dbReference type="ChEBI" id="CHEBI:29105"/>
        <label>2</label>
    </ligand>
</feature>
<feature type="binding site" evidence="1">
    <location>
        <position position="179"/>
    </location>
    <ligand>
        <name>Zn(2+)</name>
        <dbReference type="ChEBI" id="CHEBI:29105"/>
        <label>2</label>
    </ligand>
</feature>
<feature type="binding site" evidence="1">
    <location>
        <position position="232"/>
    </location>
    <ligand>
        <name>Zn(2+)</name>
        <dbReference type="ChEBI" id="CHEBI:29105"/>
        <label>2</label>
    </ligand>
</feature>
<feature type="binding site" evidence="1">
    <location>
        <position position="278"/>
    </location>
    <ligand>
        <name>substrate</name>
    </ligand>
</feature>
<feature type="binding site" evidence="1">
    <location>
        <position position="305"/>
    </location>
    <ligand>
        <name>Zn(2+)</name>
        <dbReference type="ChEBI" id="CHEBI:29105"/>
        <label>1</label>
    </ligand>
</feature>
<feature type="binding site" evidence="1">
    <location>
        <position position="309"/>
    </location>
    <ligand>
        <name>substrate</name>
    </ligand>
</feature>
<proteinExistence type="inferred from homology"/>
<sequence length="425" mass="45258">MKILITNGRVLDPAHGIDEKFDVLIEDNRIAQVGTDIQTADAEKIDAAGCLVVPGLIDIHVHLRDPGFEYKEDIESGTRAAAAGGFTAVACMPNTSPVNDNKATTQYILHKAAQAGHAKVYPVGAITKGLKGESLAELGDMKQAGCVAVTDDGHPVSHGEIMRRALEYARSFDLPIVSHSEDLSLVGDGVMNDGFVATELGLRGIPWVAEVSAVARDVMLAEYTNARLHVAHVSTRGAVEIIRAAKARGARVTAETAPHYFTLTEDAVRGYDTHAKMNPPLRTSDDLEAIREGLADGTLSVIATDHAPHHPDEKNVEFNLALNGIIGLETALPLTLRLVEEGALSLSDAIACLTSGPAAALSLPGGTLEVGRPADVTIIDPEIKWTLDPQAGQSRSRNTPFGDWKLKGRAICTIVDGRITYRLSD</sequence>
<protein>
    <recommendedName>
        <fullName evidence="1">Dihydroorotase</fullName>
        <shortName evidence="1">DHOase</shortName>
        <ecNumber evidence="1">3.5.2.3</ecNumber>
    </recommendedName>
</protein>
<dbReference type="EC" id="3.5.2.3" evidence="1"/>
<dbReference type="EMBL" id="CP000142">
    <property type="protein sequence ID" value="ABA88858.1"/>
    <property type="molecule type" value="Genomic_DNA"/>
</dbReference>
<dbReference type="RefSeq" id="WP_011341345.1">
    <property type="nucleotide sequence ID" value="NC_007498.2"/>
</dbReference>
<dbReference type="SMR" id="Q3A449"/>
<dbReference type="STRING" id="338963.Pcar_1614"/>
<dbReference type="KEGG" id="pca:Pcar_1614"/>
<dbReference type="eggNOG" id="COG0044">
    <property type="taxonomic scope" value="Bacteria"/>
</dbReference>
<dbReference type="HOGENOM" id="CLU_015572_1_0_7"/>
<dbReference type="OrthoDB" id="9803027at2"/>
<dbReference type="UniPathway" id="UPA00070">
    <property type="reaction ID" value="UER00117"/>
</dbReference>
<dbReference type="Proteomes" id="UP000002534">
    <property type="component" value="Chromosome"/>
</dbReference>
<dbReference type="GO" id="GO:0005737">
    <property type="term" value="C:cytoplasm"/>
    <property type="evidence" value="ECO:0007669"/>
    <property type="project" value="TreeGrafter"/>
</dbReference>
<dbReference type="GO" id="GO:0004038">
    <property type="term" value="F:allantoinase activity"/>
    <property type="evidence" value="ECO:0007669"/>
    <property type="project" value="TreeGrafter"/>
</dbReference>
<dbReference type="GO" id="GO:0004151">
    <property type="term" value="F:dihydroorotase activity"/>
    <property type="evidence" value="ECO:0007669"/>
    <property type="project" value="UniProtKB-UniRule"/>
</dbReference>
<dbReference type="GO" id="GO:0008270">
    <property type="term" value="F:zinc ion binding"/>
    <property type="evidence" value="ECO:0007669"/>
    <property type="project" value="UniProtKB-UniRule"/>
</dbReference>
<dbReference type="GO" id="GO:0044205">
    <property type="term" value="P:'de novo' UMP biosynthetic process"/>
    <property type="evidence" value="ECO:0007669"/>
    <property type="project" value="UniProtKB-UniRule"/>
</dbReference>
<dbReference type="GO" id="GO:0006145">
    <property type="term" value="P:purine nucleobase catabolic process"/>
    <property type="evidence" value="ECO:0007669"/>
    <property type="project" value="TreeGrafter"/>
</dbReference>
<dbReference type="CDD" id="cd01317">
    <property type="entry name" value="DHOase_IIa"/>
    <property type="match status" value="1"/>
</dbReference>
<dbReference type="Gene3D" id="3.20.20.140">
    <property type="entry name" value="Metal-dependent hydrolases"/>
    <property type="match status" value="1"/>
</dbReference>
<dbReference type="Gene3D" id="2.30.40.10">
    <property type="entry name" value="Urease, subunit C, domain 1"/>
    <property type="match status" value="1"/>
</dbReference>
<dbReference type="HAMAP" id="MF_00220_B">
    <property type="entry name" value="PyrC_classI_B"/>
    <property type="match status" value="1"/>
</dbReference>
<dbReference type="InterPro" id="IPR006680">
    <property type="entry name" value="Amidohydro-rel"/>
</dbReference>
<dbReference type="InterPro" id="IPR004722">
    <property type="entry name" value="DHOase"/>
</dbReference>
<dbReference type="InterPro" id="IPR050138">
    <property type="entry name" value="DHOase/Allantoinase_Hydrolase"/>
</dbReference>
<dbReference type="InterPro" id="IPR002195">
    <property type="entry name" value="Dihydroorotase_CS"/>
</dbReference>
<dbReference type="InterPro" id="IPR011059">
    <property type="entry name" value="Metal-dep_hydrolase_composite"/>
</dbReference>
<dbReference type="InterPro" id="IPR032466">
    <property type="entry name" value="Metal_Hydrolase"/>
</dbReference>
<dbReference type="NCBIfam" id="TIGR00857">
    <property type="entry name" value="pyrC_multi"/>
    <property type="match status" value="1"/>
</dbReference>
<dbReference type="PANTHER" id="PTHR43668">
    <property type="entry name" value="ALLANTOINASE"/>
    <property type="match status" value="1"/>
</dbReference>
<dbReference type="PANTHER" id="PTHR43668:SF2">
    <property type="entry name" value="ALLANTOINASE"/>
    <property type="match status" value="1"/>
</dbReference>
<dbReference type="Pfam" id="PF01979">
    <property type="entry name" value="Amidohydro_1"/>
    <property type="match status" value="1"/>
</dbReference>
<dbReference type="SUPFAM" id="SSF51338">
    <property type="entry name" value="Composite domain of metallo-dependent hydrolases"/>
    <property type="match status" value="1"/>
</dbReference>
<dbReference type="SUPFAM" id="SSF51556">
    <property type="entry name" value="Metallo-dependent hydrolases"/>
    <property type="match status" value="1"/>
</dbReference>
<dbReference type="PROSITE" id="PS00482">
    <property type="entry name" value="DIHYDROOROTASE_1"/>
    <property type="match status" value="1"/>
</dbReference>
<dbReference type="PROSITE" id="PS00483">
    <property type="entry name" value="DIHYDROOROTASE_2"/>
    <property type="match status" value="1"/>
</dbReference>
<reference key="1">
    <citation type="submission" date="2005-10" db="EMBL/GenBank/DDBJ databases">
        <title>Complete sequence of Pelobacter carbinolicus DSM 2380.</title>
        <authorList>
            <person name="Copeland A."/>
            <person name="Lucas S."/>
            <person name="Lapidus A."/>
            <person name="Barry K."/>
            <person name="Detter J.C."/>
            <person name="Glavina T."/>
            <person name="Hammon N."/>
            <person name="Israni S."/>
            <person name="Pitluck S."/>
            <person name="Chertkov O."/>
            <person name="Schmutz J."/>
            <person name="Larimer F."/>
            <person name="Land M."/>
            <person name="Kyrpides N."/>
            <person name="Ivanova N."/>
            <person name="Richardson P."/>
        </authorList>
    </citation>
    <scope>NUCLEOTIDE SEQUENCE [LARGE SCALE GENOMIC DNA]</scope>
    <source>
        <strain>DSM 2380 / NBRC 103641 / GraBd1</strain>
    </source>
</reference>
<name>PYRC_SYNC1</name>
<organism>
    <name type="scientific">Syntrophotalea carbinolica (strain DSM 2380 / NBRC 103641 / GraBd1)</name>
    <name type="common">Pelobacter carbinolicus</name>
    <dbReference type="NCBI Taxonomy" id="338963"/>
    <lineage>
        <taxon>Bacteria</taxon>
        <taxon>Pseudomonadati</taxon>
        <taxon>Thermodesulfobacteriota</taxon>
        <taxon>Desulfuromonadia</taxon>
        <taxon>Desulfuromonadales</taxon>
        <taxon>Syntrophotaleaceae</taxon>
        <taxon>Syntrophotalea</taxon>
    </lineage>
</organism>
<accession>Q3A449</accession>
<evidence type="ECO:0000255" key="1">
    <source>
        <dbReference type="HAMAP-Rule" id="MF_00220"/>
    </source>
</evidence>
<gene>
    <name evidence="1" type="primary">pyrC</name>
    <name type="ordered locus">Pcar_1614</name>
</gene>